<feature type="chain" id="PRO_0000348582" description="Heme transporter hrg1-B">
    <location>
        <begin position="1"/>
        <end position="145"/>
    </location>
</feature>
<feature type="transmembrane region" description="Helical" evidence="3">
    <location>
        <begin position="11"/>
        <end position="31"/>
    </location>
</feature>
<feature type="transmembrane region" description="Helical" evidence="3">
    <location>
        <begin position="39"/>
        <end position="59"/>
    </location>
</feature>
<feature type="transmembrane region" description="Helical" evidence="3">
    <location>
        <begin position="72"/>
        <end position="92"/>
    </location>
</feature>
<feature type="transmembrane region" description="Helical" evidence="3">
    <location>
        <begin position="108"/>
        <end position="128"/>
    </location>
</feature>
<feature type="short sequence motif" description="Di-leucine motif">
    <location>
        <begin position="141"/>
        <end position="142"/>
    </location>
</feature>
<comment type="function">
    <text evidence="1">Heme transporter that regulates intracellular heme availability through the endosomal or lysosomal compartment. In macrophages, is the heme transporter for heme-iron recycling. Essential for macrophage iron homeostasis, transports heme from the phagolysosome to the cytoplasm during erythrophagocytosis (EP).</text>
</comment>
<comment type="catalytic activity">
    <reaction evidence="1">
        <text>heme b(in) = heme b(out)</text>
        <dbReference type="Rhea" id="RHEA:75443"/>
        <dbReference type="ChEBI" id="CHEBI:60344"/>
    </reaction>
</comment>
<comment type="subcellular location">
    <subcellularLocation>
        <location evidence="1">Endosome membrane</location>
        <topology evidence="1">Multi-pass membrane protein</topology>
    </subcellularLocation>
    <subcellularLocation>
        <location evidence="1">Lysosome membrane</location>
        <topology evidence="1">Multi-pass membrane protein</topology>
    </subcellularLocation>
    <subcellularLocation>
        <location evidence="2">Cytoplasmic vesicle</location>
        <location evidence="2">Phagosome membrane</location>
        <topology evidence="3">Multi-pass membrane protein</topology>
    </subcellularLocation>
    <text evidence="2">In macrophages, specifically localizes to the phagolysosomal membranes during erythrophagocytosis.</text>
</comment>
<comment type="similarity">
    <text evidence="4">Belongs to the HRG family.</text>
</comment>
<gene>
    <name type="primary">slc48a1-b</name>
    <name type="synonym">hrg1-b</name>
</gene>
<accession>Q4FZW7</accession>
<protein>
    <recommendedName>
        <fullName>Heme transporter hrg1-B</fullName>
    </recommendedName>
    <alternativeName>
        <fullName>Heme-responsive gene 1 protein homolog B</fullName>
        <shortName>HRG-1B</shortName>
    </alternativeName>
    <alternativeName>
        <fullName>Solute carrier family 48 member 1-B</fullName>
    </alternativeName>
</protein>
<organism>
    <name type="scientific">Xenopus laevis</name>
    <name type="common">African clawed frog</name>
    <dbReference type="NCBI Taxonomy" id="8355"/>
    <lineage>
        <taxon>Eukaryota</taxon>
        <taxon>Metazoa</taxon>
        <taxon>Chordata</taxon>
        <taxon>Craniata</taxon>
        <taxon>Vertebrata</taxon>
        <taxon>Euteleostomi</taxon>
        <taxon>Amphibia</taxon>
        <taxon>Batrachia</taxon>
        <taxon>Anura</taxon>
        <taxon>Pipoidea</taxon>
        <taxon>Pipidae</taxon>
        <taxon>Xenopodinae</taxon>
        <taxon>Xenopus</taxon>
        <taxon>Xenopus</taxon>
    </lineage>
</organism>
<name>HRG1B_XENLA</name>
<proteinExistence type="evidence at transcript level"/>
<evidence type="ECO:0000250" key="1">
    <source>
        <dbReference type="UniProtKB" id="Q6P1K1"/>
    </source>
</evidence>
<evidence type="ECO:0000250" key="2">
    <source>
        <dbReference type="UniProtKB" id="Q9D8M3"/>
    </source>
</evidence>
<evidence type="ECO:0000255" key="3"/>
<evidence type="ECO:0000305" key="4"/>
<reference key="1">
    <citation type="submission" date="2005-07" db="EMBL/GenBank/DDBJ databases">
        <authorList>
            <consortium name="NIH - Xenopus Gene Collection (XGC) project"/>
        </authorList>
    </citation>
    <scope>NUCLEOTIDE SEQUENCE [LARGE SCALE MRNA]</scope>
    <source>
        <tissue>Egg</tissue>
    </source>
</reference>
<sequence length="145" mass="16651">MAVTKQLWIRIIYAAVGTLFGLSAFLVWNVAFVQPWTAAMGGLSGVLALWALITHIMYVQDFWRTWLKGLRFFLCIGVLFFVLALVAFITFLAVAISEKQSISDPKSLYLSCVWSFMSMKWAFLLSLYSYRYRKEFADISILSDF</sequence>
<keyword id="KW-0968">Cytoplasmic vesicle</keyword>
<keyword id="KW-0967">Endosome</keyword>
<keyword id="KW-0458">Lysosome</keyword>
<keyword id="KW-0472">Membrane</keyword>
<keyword id="KW-1185">Reference proteome</keyword>
<keyword id="KW-0812">Transmembrane</keyword>
<keyword id="KW-1133">Transmembrane helix</keyword>
<keyword id="KW-0813">Transport</keyword>
<dbReference type="EMBL" id="BC099008">
    <property type="protein sequence ID" value="AAH99008.1"/>
    <property type="molecule type" value="mRNA"/>
</dbReference>
<dbReference type="RefSeq" id="NP_001090065.1">
    <property type="nucleotide sequence ID" value="NM_001096596.2"/>
</dbReference>
<dbReference type="GeneID" id="735139"/>
<dbReference type="KEGG" id="xla:735139"/>
<dbReference type="AGR" id="Xenbase:XB-GENE-6254281"/>
<dbReference type="CTD" id="735139"/>
<dbReference type="Xenbase" id="XB-GENE-6254281">
    <property type="gene designation" value="slc48a1.S"/>
</dbReference>
<dbReference type="OMA" id="VWNIACK"/>
<dbReference type="OrthoDB" id="5954402at2759"/>
<dbReference type="Proteomes" id="UP000186698">
    <property type="component" value="Chromosome 2S"/>
</dbReference>
<dbReference type="Bgee" id="735139">
    <property type="expression patterns" value="Expressed in egg cell and 19 other cell types or tissues"/>
</dbReference>
<dbReference type="GO" id="GO:0010008">
    <property type="term" value="C:endosome membrane"/>
    <property type="evidence" value="ECO:0007669"/>
    <property type="project" value="UniProtKB-SubCell"/>
</dbReference>
<dbReference type="GO" id="GO:0005765">
    <property type="term" value="C:lysosomal membrane"/>
    <property type="evidence" value="ECO:0000318"/>
    <property type="project" value="GO_Central"/>
</dbReference>
<dbReference type="GO" id="GO:0030670">
    <property type="term" value="C:phagocytic vesicle membrane"/>
    <property type="evidence" value="ECO:0007669"/>
    <property type="project" value="UniProtKB-SubCell"/>
</dbReference>
<dbReference type="GO" id="GO:0005886">
    <property type="term" value="C:plasma membrane"/>
    <property type="evidence" value="ECO:0000318"/>
    <property type="project" value="GO_Central"/>
</dbReference>
<dbReference type="GO" id="GO:0020037">
    <property type="term" value="F:heme binding"/>
    <property type="evidence" value="ECO:0000318"/>
    <property type="project" value="GO_Central"/>
</dbReference>
<dbReference type="GO" id="GO:0015232">
    <property type="term" value="F:heme transmembrane transporter activity"/>
    <property type="evidence" value="ECO:0000318"/>
    <property type="project" value="GO_Central"/>
</dbReference>
<dbReference type="GO" id="GO:0015886">
    <property type="term" value="P:heme transport"/>
    <property type="evidence" value="ECO:0000318"/>
    <property type="project" value="GO_Central"/>
</dbReference>
<dbReference type="InterPro" id="IPR026218">
    <property type="entry name" value="HRG"/>
</dbReference>
<dbReference type="PANTHER" id="PTHR31525">
    <property type="entry name" value="HEME TRANSPORTER HRG1"/>
    <property type="match status" value="1"/>
</dbReference>
<dbReference type="PANTHER" id="PTHR31525:SF1">
    <property type="entry name" value="HEME TRANSPORTER HRG1"/>
    <property type="match status" value="1"/>
</dbReference>
<dbReference type="Pfam" id="PF16954">
    <property type="entry name" value="HRG"/>
    <property type="match status" value="2"/>
</dbReference>
<dbReference type="PRINTS" id="PR02095">
    <property type="entry name" value="TRNSPORTRHRG"/>
</dbReference>